<comment type="function">
    <text evidence="5">Lacks protease activity in vitro.</text>
</comment>
<comment type="subcellular location">
    <subcellularLocation>
        <location evidence="7">Membrane</location>
        <topology evidence="7">Single-pass membrane protein</topology>
    </subcellularLocation>
    <subcellularLocation>
        <location evidence="5">Cytoplasm</location>
    </subcellularLocation>
</comment>
<comment type="alternative products">
    <event type="alternative splicing"/>
    <isoform>
        <id>Q402U7-1</id>
        <name>1</name>
        <sequence type="displayed"/>
    </isoform>
    <isoform>
        <id>Q402U7-2</id>
        <name>2</name>
        <sequence type="described" ref="VSP_041974 VSP_041975"/>
    </isoform>
</comment>
<comment type="tissue specificity">
    <text evidence="5">Testis-specific (PubMed:23536369). Expressed by primary and secondary spermatocytes (PubMed:23536369).</text>
</comment>
<comment type="developmental stage">
    <text evidence="5">In testis, expressed at all stages from the late pachytene primary spermatocyte to the secondary spermatocyte. Not detected at day 7 after birth. Expression is detected at day 14 and increases dramatically at day 21 and reach a peak at day 28 to remain high until day 56.</text>
</comment>
<comment type="similarity">
    <text evidence="3">Belongs to the peptidase S1 family.</text>
</comment>
<comment type="caution">
    <text evidence="5">Lacks protease activity in vitro.</text>
</comment>
<sequence length="372" mass="41073">MAFQGCDCFGLLVWLLLLQTRLGKARMVPGTPSLSPLPSENGLDDSGVNPQERPLTGMPETSLPRKPGDSTRPLDSMAFTPGQSFSTMSLSRQPFPTWVPPTSACGHRTARIVGGRPAPARKWPWQVSLQVHKQHICGGSLISKWWVITAAHCVYGHLDYAVFMGDADLWSKRPVRIPVQDIIVHQDFSMMRTVVHDIALVLLAFPVNYSVNIQPVCIPEKSFLVQPGTLCWVTGWGKVLEQGRSSRILQEIELNIIRHEKCNQILKDIMGNIFTLVQEGGVCGYNEKGGDACQGDSGGPLVCEFNKTWVQVGIVSWGLGCGRIGYPGVYTEVSYYRDWIIKELSRASCWKLSGFLVLSVCLVLHLAIVVAL</sequence>
<dbReference type="EC" id="3.4.21.-"/>
<dbReference type="EMBL" id="AB162857">
    <property type="protein sequence ID" value="BAE19954.1"/>
    <property type="molecule type" value="mRNA"/>
</dbReference>
<dbReference type="EMBL" id="AB047758">
    <property type="protein sequence ID" value="BAB63919.1"/>
    <property type="molecule type" value="mRNA"/>
</dbReference>
<dbReference type="EMBL" id="AC139378">
    <property type="status" value="NOT_ANNOTATED_CDS"/>
    <property type="molecule type" value="Genomic_DNA"/>
</dbReference>
<dbReference type="CCDS" id="CCDS40782.1">
    <molecule id="Q402U7-1"/>
</dbReference>
<dbReference type="RefSeq" id="NP_683742.2">
    <molecule id="Q402U7-1"/>
    <property type="nucleotide sequence ID" value="NM_148940.3"/>
</dbReference>
<dbReference type="SMR" id="Q402U7"/>
<dbReference type="FunCoup" id="Q402U7">
    <property type="interactions" value="74"/>
</dbReference>
<dbReference type="STRING" id="10090.ENSMUSP00000095948"/>
<dbReference type="MEROPS" id="S01.106"/>
<dbReference type="GlyCosmos" id="Q402U7">
    <property type="glycosylation" value="1 site, No reported glycans"/>
</dbReference>
<dbReference type="GlyGen" id="Q402U7">
    <property type="glycosylation" value="2 sites"/>
</dbReference>
<dbReference type="PaxDb" id="10090-ENSMUSP00000095948"/>
<dbReference type="ProteomicsDB" id="291678">
    <molecule id="Q402U7-1"/>
</dbReference>
<dbReference type="ProteomicsDB" id="291679">
    <molecule id="Q402U7-2"/>
</dbReference>
<dbReference type="DNASU" id="73336"/>
<dbReference type="Ensembl" id="ENSMUST00000098345.3">
    <molecule id="Q402U7-1"/>
    <property type="protein sequence ID" value="ENSMUSP00000095948.3"/>
    <property type="gene ID" value="ENSMUSG00000032493.9"/>
</dbReference>
<dbReference type="GeneID" id="73336"/>
<dbReference type="KEGG" id="mmu:73336"/>
<dbReference type="UCSC" id="uc009rut.2">
    <molecule id="Q402U7-1"/>
    <property type="organism name" value="mouse"/>
</dbReference>
<dbReference type="UCSC" id="uc009ruu.2">
    <molecule id="Q402U7-2"/>
    <property type="organism name" value="mouse"/>
</dbReference>
<dbReference type="AGR" id="MGI:1920586"/>
<dbReference type="CTD" id="73336"/>
<dbReference type="MGI" id="MGI:1920586">
    <property type="gene designation" value="Prss44"/>
</dbReference>
<dbReference type="VEuPathDB" id="HostDB:ENSMUSG00000032493"/>
<dbReference type="eggNOG" id="KOG3627">
    <property type="taxonomic scope" value="Eukaryota"/>
</dbReference>
<dbReference type="GeneTree" id="ENSGT00940000162829"/>
<dbReference type="HOGENOM" id="CLU_006842_0_4_1"/>
<dbReference type="InParanoid" id="Q402U7"/>
<dbReference type="OMA" id="INARHIC"/>
<dbReference type="OrthoDB" id="546450at2759"/>
<dbReference type="PhylomeDB" id="Q402U7"/>
<dbReference type="TreeFam" id="TF351676"/>
<dbReference type="BioGRID-ORCS" id="73336">
    <property type="hits" value="1 hit in 76 CRISPR screens"/>
</dbReference>
<dbReference type="PRO" id="PR:Q402U7"/>
<dbReference type="Proteomes" id="UP000000589">
    <property type="component" value="Chromosome 9"/>
</dbReference>
<dbReference type="RNAct" id="Q402U7">
    <property type="molecule type" value="protein"/>
</dbReference>
<dbReference type="Bgee" id="ENSMUSG00000032493">
    <property type="expression patterns" value="Expressed in spermatocyte and 40 other cell types or tissues"/>
</dbReference>
<dbReference type="ExpressionAtlas" id="Q402U7">
    <property type="expression patterns" value="baseline and differential"/>
</dbReference>
<dbReference type="GO" id="GO:0005737">
    <property type="term" value="C:cytoplasm"/>
    <property type="evidence" value="ECO:0000314"/>
    <property type="project" value="MGI"/>
</dbReference>
<dbReference type="GO" id="GO:0016020">
    <property type="term" value="C:membrane"/>
    <property type="evidence" value="ECO:0007669"/>
    <property type="project" value="UniProtKB-SubCell"/>
</dbReference>
<dbReference type="GO" id="GO:0004252">
    <property type="term" value="F:serine-type endopeptidase activity"/>
    <property type="evidence" value="ECO:0007669"/>
    <property type="project" value="InterPro"/>
</dbReference>
<dbReference type="GO" id="GO:0006508">
    <property type="term" value="P:proteolysis"/>
    <property type="evidence" value="ECO:0007669"/>
    <property type="project" value="UniProtKB-KW"/>
</dbReference>
<dbReference type="CDD" id="cd00190">
    <property type="entry name" value="Tryp_SPc"/>
    <property type="match status" value="1"/>
</dbReference>
<dbReference type="FunFam" id="2.40.10.10:FF:000006">
    <property type="entry name" value="Serine proteinase stubble"/>
    <property type="match status" value="1"/>
</dbReference>
<dbReference type="Gene3D" id="2.40.10.10">
    <property type="entry name" value="Trypsin-like serine proteases"/>
    <property type="match status" value="1"/>
</dbReference>
<dbReference type="InterPro" id="IPR009003">
    <property type="entry name" value="Peptidase_S1_PA"/>
</dbReference>
<dbReference type="InterPro" id="IPR043504">
    <property type="entry name" value="Peptidase_S1_PA_chymotrypsin"/>
</dbReference>
<dbReference type="InterPro" id="IPR001314">
    <property type="entry name" value="Peptidase_S1A"/>
</dbReference>
<dbReference type="InterPro" id="IPR001254">
    <property type="entry name" value="Trypsin_dom"/>
</dbReference>
<dbReference type="InterPro" id="IPR018114">
    <property type="entry name" value="TRYPSIN_HIS"/>
</dbReference>
<dbReference type="InterPro" id="IPR033116">
    <property type="entry name" value="TRYPSIN_SER"/>
</dbReference>
<dbReference type="PANTHER" id="PTHR24253:SF159">
    <property type="entry name" value="SERINE PROTEASE 42"/>
    <property type="match status" value="1"/>
</dbReference>
<dbReference type="PANTHER" id="PTHR24253">
    <property type="entry name" value="TRANSMEMBRANE PROTEASE SERINE"/>
    <property type="match status" value="1"/>
</dbReference>
<dbReference type="Pfam" id="PF00089">
    <property type="entry name" value="Trypsin"/>
    <property type="match status" value="1"/>
</dbReference>
<dbReference type="PRINTS" id="PR00722">
    <property type="entry name" value="CHYMOTRYPSIN"/>
</dbReference>
<dbReference type="SMART" id="SM00020">
    <property type="entry name" value="Tryp_SPc"/>
    <property type="match status" value="1"/>
</dbReference>
<dbReference type="SUPFAM" id="SSF50494">
    <property type="entry name" value="Trypsin-like serine proteases"/>
    <property type="match status" value="1"/>
</dbReference>
<dbReference type="PROSITE" id="PS50240">
    <property type="entry name" value="TRYPSIN_DOM"/>
    <property type="match status" value="1"/>
</dbReference>
<dbReference type="PROSITE" id="PS00134">
    <property type="entry name" value="TRYPSIN_HIS"/>
    <property type="match status" value="1"/>
</dbReference>
<dbReference type="PROSITE" id="PS00135">
    <property type="entry name" value="TRYPSIN_SER"/>
    <property type="match status" value="1"/>
</dbReference>
<name>PRS44_MOUSE</name>
<feature type="signal peptide" evidence="2">
    <location>
        <begin position="1"/>
        <end position="25"/>
    </location>
</feature>
<feature type="chain" id="PRO_0000413699" description="Serine protease 44">
    <location>
        <begin position="26"/>
        <end position="372"/>
    </location>
</feature>
<feature type="topological domain" description="Extracellular" evidence="2">
    <location>
        <begin position="26"/>
        <end position="351"/>
    </location>
</feature>
<feature type="transmembrane region" description="Helical" evidence="2">
    <location>
        <begin position="352"/>
        <end position="372"/>
    </location>
</feature>
<feature type="domain" description="Peptidase S1" evidence="3">
    <location>
        <begin position="112"/>
        <end position="345"/>
    </location>
</feature>
<feature type="region of interest" description="Disordered" evidence="4">
    <location>
        <begin position="31"/>
        <end position="72"/>
    </location>
</feature>
<feature type="active site" description="Charge relay system" evidence="1">
    <location>
        <position position="152"/>
    </location>
</feature>
<feature type="active site" description="Charge relay system" evidence="1">
    <location>
        <position position="197"/>
    </location>
</feature>
<feature type="active site" description="Charge relay system" evidence="1">
    <location>
        <position position="297"/>
    </location>
</feature>
<feature type="glycosylation site" description="N-linked (GlcNAc...) asparagine" evidence="2">
    <location>
        <position position="208"/>
    </location>
</feature>
<feature type="disulfide bond" evidence="3">
    <location>
        <begin position="137"/>
        <end position="153"/>
    </location>
</feature>
<feature type="disulfide bond" evidence="3">
    <location>
        <begin position="231"/>
        <end position="303"/>
    </location>
</feature>
<feature type="disulfide bond" evidence="3">
    <location>
        <begin position="262"/>
        <end position="283"/>
    </location>
</feature>
<feature type="disulfide bond" evidence="3">
    <location>
        <begin position="293"/>
        <end position="321"/>
    </location>
</feature>
<feature type="splice variant" id="VSP_041974" description="In isoform 2." evidence="6">
    <location>
        <begin position="1"/>
        <end position="163"/>
    </location>
</feature>
<feature type="splice variant" id="VSP_041975" description="In isoform 2." evidence="6">
    <original>SYYRDWIIKELSRASCWKLSGFLVLSVCLVLHLAIVVAL</original>
    <variation>ASPNDTALPPTHRAHCPQDCFQDPRLAKME</variation>
    <location>
        <begin position="334"/>
        <end position="372"/>
    </location>
</feature>
<evidence type="ECO:0000250" key="1"/>
<evidence type="ECO:0000255" key="2"/>
<evidence type="ECO:0000255" key="3">
    <source>
        <dbReference type="PROSITE-ProRule" id="PRU00274"/>
    </source>
</evidence>
<evidence type="ECO:0000256" key="4">
    <source>
        <dbReference type="SAM" id="MobiDB-lite"/>
    </source>
</evidence>
<evidence type="ECO:0000269" key="5">
    <source>
    </source>
</evidence>
<evidence type="ECO:0000303" key="6">
    <source>
    </source>
</evidence>
<evidence type="ECO:0000305" key="7"/>
<evidence type="ECO:0000312" key="8">
    <source>
        <dbReference type="MGI" id="MGI:1920586"/>
    </source>
</evidence>
<accession>Q402U7</accession>
<accession>Q924U6</accession>
<reference key="1">
    <citation type="journal article" date="2009" name="Zool. Sci.">
        <title>Two distinct localization patterns of testis-specific serine protease 1 (TESSP1) in the seminiferous tubules of the mouse testis.</title>
        <authorList>
            <person name="Takano N."/>
            <person name="Kimura A."/>
            <person name="Takahashi T."/>
        </authorList>
    </citation>
    <scope>NUCLEOTIDE SEQUENCE [MRNA] (ISOFORM 1)</scope>
</reference>
<reference key="2">
    <citation type="journal article" date="2013" name="Biol. Reprod.">
        <title>Three testis-specific paralogous serine proteases play different roles in murine spermatogenesis and are involved in germ cell survival during meiosis.</title>
        <authorList>
            <person name="Yoneda R."/>
            <person name="Takahashi T."/>
            <person name="Matsui H."/>
            <person name="Takano N."/>
            <person name="Hasebe Y."/>
            <person name="Ogiwara K."/>
            <person name="Kimura A.P."/>
        </authorList>
    </citation>
    <scope>NUCLEOTIDE SEQUENCE [MRNA] (ISOFORM 2)</scope>
    <scope>TISSUE SPECIFICITY</scope>
    <scope>SUBCELLULAR LOCATION</scope>
    <scope>DEVELOPMENTAL STAGE</scope>
    <scope>FUNCTION</scope>
    <scope>CAUTION</scope>
</reference>
<reference key="3">
    <citation type="journal article" date="2009" name="PLoS Biol.">
        <title>Lineage-specific biology revealed by a finished genome assembly of the mouse.</title>
        <authorList>
            <person name="Church D.M."/>
            <person name="Goodstadt L."/>
            <person name="Hillier L.W."/>
            <person name="Zody M.C."/>
            <person name="Goldstein S."/>
            <person name="She X."/>
            <person name="Bult C.J."/>
            <person name="Agarwala R."/>
            <person name="Cherry J.L."/>
            <person name="DiCuccio M."/>
            <person name="Hlavina W."/>
            <person name="Kapustin Y."/>
            <person name="Meric P."/>
            <person name="Maglott D."/>
            <person name="Birtle Z."/>
            <person name="Marques A.C."/>
            <person name="Graves T."/>
            <person name="Zhou S."/>
            <person name="Teague B."/>
            <person name="Potamousis K."/>
            <person name="Churas C."/>
            <person name="Place M."/>
            <person name="Herschleb J."/>
            <person name="Runnheim R."/>
            <person name="Forrest D."/>
            <person name="Amos-Landgraf J."/>
            <person name="Schwartz D.C."/>
            <person name="Cheng Z."/>
            <person name="Lindblad-Toh K."/>
            <person name="Eichler E.E."/>
            <person name="Ponting C.P."/>
        </authorList>
    </citation>
    <scope>NUCLEOTIDE SEQUENCE [LARGE SCALE GENOMIC DNA]</scope>
    <source>
        <strain>C57BL/6J</strain>
    </source>
</reference>
<keyword id="KW-0025">Alternative splicing</keyword>
<keyword id="KW-0963">Cytoplasm</keyword>
<keyword id="KW-1015">Disulfide bond</keyword>
<keyword id="KW-0325">Glycoprotein</keyword>
<keyword id="KW-0378">Hydrolase</keyword>
<keyword id="KW-0472">Membrane</keyword>
<keyword id="KW-0645">Protease</keyword>
<keyword id="KW-1185">Reference proteome</keyword>
<keyword id="KW-0720">Serine protease</keyword>
<keyword id="KW-0732">Signal</keyword>
<keyword id="KW-0812">Transmembrane</keyword>
<keyword id="KW-1133">Transmembrane helix</keyword>
<proteinExistence type="evidence at transcript level"/>
<protein>
    <recommendedName>
        <fullName evidence="7">Serine protease 44</fullName>
        <ecNumber>3.4.21.-</ecNumber>
    </recommendedName>
    <alternativeName>
        <fullName>Testis serine protease 4</fullName>
        <shortName>TESSP-4</shortName>
    </alternativeName>
    <alternativeName>
        <fullName>Testis-specific serine protease 4</fullName>
    </alternativeName>
</protein>
<gene>
    <name evidence="8" type="primary">Prss44</name>
    <name evidence="6" type="synonym">Tessp4</name>
</gene>
<organism>
    <name type="scientific">Mus musculus</name>
    <name type="common">Mouse</name>
    <dbReference type="NCBI Taxonomy" id="10090"/>
    <lineage>
        <taxon>Eukaryota</taxon>
        <taxon>Metazoa</taxon>
        <taxon>Chordata</taxon>
        <taxon>Craniata</taxon>
        <taxon>Vertebrata</taxon>
        <taxon>Euteleostomi</taxon>
        <taxon>Mammalia</taxon>
        <taxon>Eutheria</taxon>
        <taxon>Euarchontoglires</taxon>
        <taxon>Glires</taxon>
        <taxon>Rodentia</taxon>
        <taxon>Myomorpha</taxon>
        <taxon>Muroidea</taxon>
        <taxon>Muridae</taxon>
        <taxon>Murinae</taxon>
        <taxon>Mus</taxon>
        <taxon>Mus</taxon>
    </lineage>
</organism>